<comment type="function">
    <text evidence="1">Component of the A-type ATP synthase that produces ATP from ADP in the presence of a proton gradient across the membrane.</text>
</comment>
<comment type="subunit">
    <text evidence="1">Has multiple subunits with at least A(3), B(3), C, D, E, F, H, I and proteolipid K(x).</text>
</comment>
<comment type="subcellular location">
    <subcellularLocation>
        <location evidence="1">Cell membrane</location>
        <topology evidence="1">Peripheral membrane protein</topology>
    </subcellularLocation>
</comment>
<comment type="similarity">
    <text evidence="1">Belongs to the V-ATPase F subunit family.</text>
</comment>
<evidence type="ECO:0000255" key="1">
    <source>
        <dbReference type="HAMAP-Rule" id="MF_00312"/>
    </source>
</evidence>
<organism>
    <name type="scientific">Methanosphaera stadtmanae (strain ATCC 43021 / DSM 3091 / JCM 11832 / MCB-3)</name>
    <dbReference type="NCBI Taxonomy" id="339860"/>
    <lineage>
        <taxon>Archaea</taxon>
        <taxon>Methanobacteriati</taxon>
        <taxon>Methanobacteriota</taxon>
        <taxon>Methanomada group</taxon>
        <taxon>Methanobacteria</taxon>
        <taxon>Methanobacteriales</taxon>
        <taxon>Methanobacteriaceae</taxon>
        <taxon>Methanosphaera</taxon>
    </lineage>
</organism>
<feature type="chain" id="PRO_1000059435" description="A-type ATP synthase subunit F">
    <location>
        <begin position="1"/>
        <end position="106"/>
    </location>
</feature>
<protein>
    <recommendedName>
        <fullName evidence="1">A-type ATP synthase subunit F</fullName>
    </recommendedName>
</protein>
<keyword id="KW-0066">ATP synthesis</keyword>
<keyword id="KW-1003">Cell membrane</keyword>
<keyword id="KW-0375">Hydrogen ion transport</keyword>
<keyword id="KW-0406">Ion transport</keyword>
<keyword id="KW-0472">Membrane</keyword>
<keyword id="KW-1185">Reference proteome</keyword>
<keyword id="KW-0813">Transport</keyword>
<reference key="1">
    <citation type="journal article" date="2006" name="J. Bacteriol.">
        <title>The genome sequence of Methanosphaera stadtmanae reveals why this human intestinal archaeon is restricted to methanol and H2 for methane formation and ATP synthesis.</title>
        <authorList>
            <person name="Fricke W.F."/>
            <person name="Seedorf H."/>
            <person name="Henne A."/>
            <person name="Kruer M."/>
            <person name="Liesegang H."/>
            <person name="Hedderich R."/>
            <person name="Gottschalk G."/>
            <person name="Thauer R.K."/>
        </authorList>
    </citation>
    <scope>NUCLEOTIDE SEQUENCE [LARGE SCALE GENOMIC DNA]</scope>
    <source>
        <strain>ATCC 43021 / DSM 3091 / JCM 11832 / MCB-3</strain>
    </source>
</reference>
<accession>Q2NF86</accession>
<sequence length="106" mass="11779">MKNDIAIMADPDTVTGFMLGGIKSGFPVHNKEEAKTTLKQLVDDEYSIIITTEKIGDELRDDITKYTGSKALPMIIEVPDKSGSHKRETDPMNDLIKRVIGVEMVK</sequence>
<name>AATF_METST</name>
<proteinExistence type="inferred from homology"/>
<gene>
    <name evidence="1" type="primary">atpF</name>
    <name type="ordered locus">Msp_1136</name>
</gene>
<dbReference type="EMBL" id="CP000102">
    <property type="protein sequence ID" value="ABC57517.1"/>
    <property type="molecule type" value="Genomic_DNA"/>
</dbReference>
<dbReference type="RefSeq" id="WP_011406716.1">
    <property type="nucleotide sequence ID" value="NC_007681.1"/>
</dbReference>
<dbReference type="SMR" id="Q2NF86"/>
<dbReference type="STRING" id="339860.Msp_1136"/>
<dbReference type="KEGG" id="mst:Msp_1136"/>
<dbReference type="eggNOG" id="arCOG04102">
    <property type="taxonomic scope" value="Archaea"/>
</dbReference>
<dbReference type="HOGENOM" id="CLU_135754_2_0_2"/>
<dbReference type="OrthoDB" id="24971at2157"/>
<dbReference type="Proteomes" id="UP000001931">
    <property type="component" value="Chromosome"/>
</dbReference>
<dbReference type="GO" id="GO:0005886">
    <property type="term" value="C:plasma membrane"/>
    <property type="evidence" value="ECO:0007669"/>
    <property type="project" value="UniProtKB-SubCell"/>
</dbReference>
<dbReference type="GO" id="GO:0005524">
    <property type="term" value="F:ATP binding"/>
    <property type="evidence" value="ECO:0007669"/>
    <property type="project" value="UniProtKB-UniRule"/>
</dbReference>
<dbReference type="GO" id="GO:0046933">
    <property type="term" value="F:proton-transporting ATP synthase activity, rotational mechanism"/>
    <property type="evidence" value="ECO:0007669"/>
    <property type="project" value="UniProtKB-UniRule"/>
</dbReference>
<dbReference type="GO" id="GO:0046961">
    <property type="term" value="F:proton-transporting ATPase activity, rotational mechanism"/>
    <property type="evidence" value="ECO:0007669"/>
    <property type="project" value="InterPro"/>
</dbReference>
<dbReference type="GO" id="GO:0042777">
    <property type="term" value="P:proton motive force-driven plasma membrane ATP synthesis"/>
    <property type="evidence" value="ECO:0007669"/>
    <property type="project" value="UniProtKB-UniRule"/>
</dbReference>
<dbReference type="Gene3D" id="3.40.50.10580">
    <property type="entry name" value="ATPase, V1 complex, subunit F"/>
    <property type="match status" value="1"/>
</dbReference>
<dbReference type="HAMAP" id="MF_00312">
    <property type="entry name" value="ATP_synth_F_arch"/>
    <property type="match status" value="1"/>
</dbReference>
<dbReference type="InterPro" id="IPR008218">
    <property type="entry name" value="ATPase_V1-cplx_f_g_su"/>
</dbReference>
<dbReference type="InterPro" id="IPR022944">
    <property type="entry name" value="ATPase_V1-cplx_fsu_bac/arc"/>
</dbReference>
<dbReference type="InterPro" id="IPR036906">
    <property type="entry name" value="ATPase_V1_fsu_sf"/>
</dbReference>
<dbReference type="NCBIfam" id="NF003047">
    <property type="entry name" value="PRK03957.1"/>
    <property type="match status" value="1"/>
</dbReference>
<dbReference type="Pfam" id="PF01990">
    <property type="entry name" value="ATP-synt_F"/>
    <property type="match status" value="1"/>
</dbReference>
<dbReference type="SUPFAM" id="SSF159468">
    <property type="entry name" value="AtpF-like"/>
    <property type="match status" value="1"/>
</dbReference>